<name>FOXD5_XENTR</name>
<reference evidence="6 7" key="1">
    <citation type="journal article" date="2004" name="Biochem. Biophys. Res. Commun.">
        <title>A downstream enhancer is essential for Xenopus FoxD5 transcription.</title>
        <authorList>
            <person name="Schoen C."/>
            <person name="Koester M."/>
            <person name="Knoechel W."/>
        </authorList>
    </citation>
    <scope>NUCLEOTIDE SEQUENCE [GENOMIC DNA]</scope>
    <scope>TISSUE SPECIFICITY</scope>
</reference>
<reference evidence="8" key="2">
    <citation type="submission" date="2006-06" db="EMBL/GenBank/DDBJ databases">
        <authorList>
            <consortium name="Sanger Xenopus tropicalis EST/cDNA project"/>
        </authorList>
    </citation>
    <scope>NUCLEOTIDE SEQUENCE [LARGE SCALE MRNA]</scope>
    <source>
        <tissue evidence="8">Gastrula</tissue>
    </source>
</reference>
<evidence type="ECO:0000250" key="1">
    <source>
        <dbReference type="UniProtKB" id="Q9PRJ8"/>
    </source>
</evidence>
<evidence type="ECO:0000255" key="2"/>
<evidence type="ECO:0000255" key="3">
    <source>
        <dbReference type="PROSITE-ProRule" id="PRU00089"/>
    </source>
</evidence>
<evidence type="ECO:0000256" key="4">
    <source>
        <dbReference type="SAM" id="MobiDB-lite"/>
    </source>
</evidence>
<evidence type="ECO:0000269" key="5">
    <source>
    </source>
</evidence>
<evidence type="ECO:0000305" key="6"/>
<evidence type="ECO:0000312" key="7">
    <source>
        <dbReference type="EMBL" id="CAH64539.1"/>
    </source>
</evidence>
<evidence type="ECO:0000312" key="8">
    <source>
        <dbReference type="EMBL" id="CAJ81989.1"/>
    </source>
</evidence>
<keyword id="KW-0238">DNA-binding</keyword>
<keyword id="KW-0539">Nucleus</keyword>
<keyword id="KW-1185">Reference proteome</keyword>
<keyword id="KW-0678">Repressor</keyword>
<keyword id="KW-0804">Transcription</keyword>
<keyword id="KW-0805">Transcription regulation</keyword>
<feature type="chain" id="PRO_0000259618" description="Forkhead box protein D5">
    <location>
        <begin position="1"/>
        <end position="352"/>
    </location>
</feature>
<feature type="DNA-binding region" description="Fork-head" evidence="3">
    <location>
        <begin position="97"/>
        <end position="191"/>
    </location>
</feature>
<feature type="region of interest" description="Disordered" evidence="4">
    <location>
        <begin position="1"/>
        <end position="32"/>
    </location>
</feature>
<feature type="region of interest" description="Disordered" evidence="4">
    <location>
        <begin position="47"/>
        <end position="92"/>
    </location>
</feature>
<feature type="compositionally biased region" description="Acidic residues" evidence="4">
    <location>
        <begin position="20"/>
        <end position="32"/>
    </location>
</feature>
<feature type="compositionally biased region" description="Low complexity" evidence="4">
    <location>
        <begin position="73"/>
        <end position="82"/>
    </location>
</feature>
<feature type="sequence conflict" description="In Ref. 2; CAJ81989." evidence="6" ref="2">
    <original>A</original>
    <variation>S</variation>
    <location>
        <position position="247"/>
    </location>
</feature>
<dbReference type="EMBL" id="AJ850137">
    <property type="protein sequence ID" value="CAH64539.1"/>
    <property type="molecule type" value="Genomic_DNA"/>
</dbReference>
<dbReference type="EMBL" id="CR762235">
    <property type="protein sequence ID" value="CAJ81989.1"/>
    <property type="molecule type" value="mRNA"/>
</dbReference>
<dbReference type="SMR" id="Q5WM45"/>
<dbReference type="FunCoup" id="Q5WM45">
    <property type="interactions" value="42"/>
</dbReference>
<dbReference type="PaxDb" id="8364-ENSXETP00000003507"/>
<dbReference type="GeneID" id="549682"/>
<dbReference type="KEGG" id="xtr:549682"/>
<dbReference type="AGR" id="Xenbase:XB-GENE-479247"/>
<dbReference type="CTD" id="200350"/>
<dbReference type="Xenbase" id="XB-GENE-479247">
    <property type="gene designation" value="foxd4l1"/>
</dbReference>
<dbReference type="eggNOG" id="KOG2294">
    <property type="taxonomic scope" value="Eukaryota"/>
</dbReference>
<dbReference type="InParanoid" id="Q5WM45"/>
<dbReference type="OrthoDB" id="5402974at2759"/>
<dbReference type="Proteomes" id="UP000008143">
    <property type="component" value="Chromosome 1"/>
</dbReference>
<dbReference type="GO" id="GO:0005634">
    <property type="term" value="C:nucleus"/>
    <property type="evidence" value="ECO:0000250"/>
    <property type="project" value="UniProtKB"/>
</dbReference>
<dbReference type="GO" id="GO:0003700">
    <property type="term" value="F:DNA-binding transcription factor activity"/>
    <property type="evidence" value="ECO:0007669"/>
    <property type="project" value="InterPro"/>
</dbReference>
<dbReference type="GO" id="GO:0043565">
    <property type="term" value="F:sequence-specific DNA binding"/>
    <property type="evidence" value="ECO:0007669"/>
    <property type="project" value="InterPro"/>
</dbReference>
<dbReference type="GO" id="GO:0045892">
    <property type="term" value="P:negative regulation of DNA-templated transcription"/>
    <property type="evidence" value="ECO:0000250"/>
    <property type="project" value="UniProtKB"/>
</dbReference>
<dbReference type="CDD" id="cd20048">
    <property type="entry name" value="FH_FOXD4-like"/>
    <property type="match status" value="1"/>
</dbReference>
<dbReference type="FunFam" id="1.10.10.10:FF:000016">
    <property type="entry name" value="Forkhead box protein I1"/>
    <property type="match status" value="1"/>
</dbReference>
<dbReference type="Gene3D" id="1.10.10.10">
    <property type="entry name" value="Winged helix-like DNA-binding domain superfamily/Winged helix DNA-binding domain"/>
    <property type="match status" value="1"/>
</dbReference>
<dbReference type="InterPro" id="IPR001766">
    <property type="entry name" value="Fork_head_dom"/>
</dbReference>
<dbReference type="InterPro" id="IPR050211">
    <property type="entry name" value="FOX_domain-containing"/>
</dbReference>
<dbReference type="InterPro" id="IPR018122">
    <property type="entry name" value="TF_fork_head_CS_1"/>
</dbReference>
<dbReference type="InterPro" id="IPR030456">
    <property type="entry name" value="TF_fork_head_CS_2"/>
</dbReference>
<dbReference type="InterPro" id="IPR036388">
    <property type="entry name" value="WH-like_DNA-bd_sf"/>
</dbReference>
<dbReference type="InterPro" id="IPR036390">
    <property type="entry name" value="WH_DNA-bd_sf"/>
</dbReference>
<dbReference type="PANTHER" id="PTHR11829">
    <property type="entry name" value="FORKHEAD BOX PROTEIN"/>
    <property type="match status" value="1"/>
</dbReference>
<dbReference type="PANTHER" id="PTHR11829:SF401">
    <property type="entry name" value="FORKHEAD BOX PROTEIN D5"/>
    <property type="match status" value="1"/>
</dbReference>
<dbReference type="Pfam" id="PF00250">
    <property type="entry name" value="Forkhead"/>
    <property type="match status" value="1"/>
</dbReference>
<dbReference type="PRINTS" id="PR00053">
    <property type="entry name" value="FORKHEAD"/>
</dbReference>
<dbReference type="SMART" id="SM00339">
    <property type="entry name" value="FH"/>
    <property type="match status" value="1"/>
</dbReference>
<dbReference type="SUPFAM" id="SSF46785">
    <property type="entry name" value="Winged helix' DNA-binding domain"/>
    <property type="match status" value="1"/>
</dbReference>
<dbReference type="PROSITE" id="PS00657">
    <property type="entry name" value="FORK_HEAD_1"/>
    <property type="match status" value="1"/>
</dbReference>
<dbReference type="PROSITE" id="PS00658">
    <property type="entry name" value="FORK_HEAD_2"/>
    <property type="match status" value="1"/>
</dbReference>
<dbReference type="PROSITE" id="PS50039">
    <property type="entry name" value="FORK_HEAD_3"/>
    <property type="match status" value="1"/>
</dbReference>
<sequence>MSLSQESGAHHDPQDYPVVSDEEDEIDILGEDDSCSLKSHFYLQPTHSEMGDSGILSPSKLSCTESESDSSGESEGGTSKDSPATPSGGKAKRALVKPPYSYIALITMAILQSPHKKLTLSGICDFISSKFPYYKDKFPAWQNSIRHNLSLNDCFIKIPREPGNPGKGNYWTLDPASEDMFDNGSFLRRRKRFKRHQQEFFKDGLVMYNPLPYYRPYSTIQPQQVLQQTPVACMAIPENLTMPTHLAPYPDIKRKVPYPDQGVHRGFEALDADNHPNKSQSKCSFSIENIMRKPKEPEPSFSTFNPHWNYNHLLQRPNSCLLPAVLNLSTGPLLSNAQGTRQYNLIKFPGCY</sequence>
<accession>Q5WM45</accession>
<accession>Q28F09</accession>
<proteinExistence type="evidence at transcript level"/>
<comment type="function">
    <text evidence="1">Transcriptional repressor.</text>
</comment>
<comment type="subcellular location">
    <subcellularLocation>
        <location evidence="2 6">Nucleus</location>
    </subcellularLocation>
</comment>
<comment type="tissue specificity">
    <text evidence="5">Expression begins in the newly forming dorsal mesoderm and is maintained during gastrulation at the dorsal blastopore lip (Spemann organizer). At the early neurula stages, expressed in a row of cells along the dorsal midline that are destined to become the fllor plate of the neural tube. At late neurula, expressed within the anterior and posterior poles of the embryo. After neural closure, expression is detected only in the tailtip, the otic vesicle and at the midbrain/hindbrain boundary.</text>
</comment>
<gene>
    <name evidence="7" type="primary">foxd5</name>
    <name type="ORF">TGas140e03.1</name>
</gene>
<organism>
    <name type="scientific">Xenopus tropicalis</name>
    <name type="common">Western clawed frog</name>
    <name type="synonym">Silurana tropicalis</name>
    <dbReference type="NCBI Taxonomy" id="8364"/>
    <lineage>
        <taxon>Eukaryota</taxon>
        <taxon>Metazoa</taxon>
        <taxon>Chordata</taxon>
        <taxon>Craniata</taxon>
        <taxon>Vertebrata</taxon>
        <taxon>Euteleostomi</taxon>
        <taxon>Amphibia</taxon>
        <taxon>Batrachia</taxon>
        <taxon>Anura</taxon>
        <taxon>Pipoidea</taxon>
        <taxon>Pipidae</taxon>
        <taxon>Xenopodinae</taxon>
        <taxon>Xenopus</taxon>
        <taxon>Silurana</taxon>
    </lineage>
</organism>
<protein>
    <recommendedName>
        <fullName>Forkhead box protein D5</fullName>
        <shortName>FoxD5</shortName>
    </recommendedName>
    <alternativeName>
        <fullName>XtFoxD5</fullName>
    </alternativeName>
</protein>